<keyword id="KW-0227">DNA damage</keyword>
<keyword id="KW-0234">DNA repair</keyword>
<keyword id="KW-0539">Nucleus</keyword>
<keyword id="KW-0597">Phosphoprotein</keyword>
<keyword id="KW-1185">Reference proteome</keyword>
<keyword id="KW-0808">Transferase</keyword>
<keyword id="KW-0833">Ubl conjugation pathway</keyword>
<sequence>MSNRPNSNPGGSLRRSQRNTAAAQPIDHTLAGRNSLSLSVGSLSIPDPDLEAAGTSGQQGRREGSSTRALKRSSVSEPNITFSPSPAKRPKVVSSHFSDSSASGPSAPAISPEVTEPRKAPASVSTKSKKRRLAAEPAPARALSKKSSSYPGPSGASSTPSQKRKKADATLLSSSSSSSLPSSSSAAGPLPPRSEASRAAKPTKLASKSAASAKAGCSTVTDSSSSSASSSSSSSSSSSAATGTNSCAPQGARLKQGKDQSKARRSRSASSPSPRRSSRDKEQSKAAGSSKFDWASRFNSKVNLPKPKLSLPGSAKAETSSKPGPSGLQAKLASLRKSTKKRSESPPAELPSCRRSTRQKTTGSCASTSRRGSGLGKRGAAEARRQEKMADSDNNQDGANSSAARTEETPQGASASSSVAGAVGMTTSGESESDDSEMGRLQALLEARGLPPHLFGPFGPRMSQLFHRTIGSGASSKAQQLLQGLQATGDESQQLQAAIEMCQLLVMGNEETLGGFPVKSVVPALITLLQMEHNFDIMNHASRALTYMMEALPRSSAVVVDAIPVFLEKLQVIQFIDVAEQALTALEMLSRRHSKAILQAGGLADCLLYLEFFSINAQRNALAIAANCCQSITPDEFHFVADSLPLLTQRLTHQDKKSVESTCLCFARLVDNFQHEENLLQQVASRDLLTNIQQLLVLTPPVLSSGMFIMVVRMFSLMCSNCPCLAVQLMKQNIAETLRFLLCGASNGSCQEQIDLVPRSPQELYELTSLICELMPCLPREGIFAVDAMLKKGSAQTTEGAIWQWRDDRGLWHPYNRIDSRIIEQINEDTGTARAIQRKPNPLANPNTGGHLEVRREDARAQLMKEDPELAKCFIKTLFGVLYEVYSSSAGPAVRHKCLRAILRIIYFADAELLKDVLRNHAVSSHIASMLSSQDLKIVVGSLQMAEILMQKLPDVFSVYFRREGVMHQVKNLAESEVFLTSPPKACTSGTASLCTTTITTATTTAASNVTPDLGSPSFQHSMDDSLDLSPQGRLSDVLKRKRLPKRGPRRPKYSPPRDDDKVDNQAKSPTTTQSPKSSFLASLNPKTWGKLGTQANSANSEPSRTAGVSGLARVPPKDSVSNNRDKIKAWIKEQASKFVERYFNSESVDGSNPALNVLQRLCTATEQLNLQMDSGVECLEEISSIVSESDVSSFEIQHSGLVKQLLLYLTSNSERDTISRDERIKRFLHVFFGCPIPGQEPPGRLDPTENGPLLALVHKMNNCLSQMEQFPVKVHDFPSGNGNGSRGSQALKFFNTHQLKCQLQRHPDCTNVKQWKGGPVKIDPLALVQAIERYLVVRGYGRIREEDEDSDDDGSDDEIDESLAAQFLNSGSVRHRLQFYIGEHLLPYNMTVYQAVRQFSLQAEEERESTDDEANPLGRAGIWTKTHTVWYKPVREDEEGCKDAVGGKRGRAQTAPTKTSPRNAKKQDELWHEGVCPSVANPLETYLICDPPEGITFDDPSMEVILLLRVLHSISRYWFYLYDNAACKEIIPTGEFINSKLTAKANRQLQDPLVIMTGNIPTWLTELGKTCPFFFPFDTRQMLFYVTAFDRDRAMQRLLDTNPEINQSDSQDSRVAPRLDRKKRTINRDELLKQAESVMQDLGSSRAMLEIQYENEVGTGLGPTQEFYALVSQELQRADLGLWRGEEVTLSNPKGSQEGTKYMFSSRGLFAVPFGRTTKPAHIAKIKMKFRFLGKLMAKAIMDFRLLDLPLGLPFYKWMLRHESSISSHDLVNIDPGVAKSIQHLEDIIRQKKRIEQDRSHTRETLQQALESLNMNGCSVEDLGLDFTLPGFPNIELKKGGKDVPVTIHNLEDYLRLVVYWTLNEGVLRQFESFREGFESVFPLHHLQYFYPEELDQLLCGSKSESWDVKTLMECCRPDHGYTHDSRAVRFLFEVLSSFDAEQQRLFLQFVTGSPRLPVGGFRSLNPPLTIVRKTFESTENPDDFLPSVMTCVNYLKLPDYSSIEIMREKLLIAAREGQQSFHLS</sequence>
<comment type="function">
    <text evidence="2">E3 ubiquitin-protein ligase involved in ubiquitin fusion degradation (UFD) pathway and regulation of DNA repair. Part of the ubiquitin fusion degradation (UFD) pathway, a process that mediates ubiquitination of protein at their N-terminus, regardless of the presence of lysine residues in target proteins. Acts as a key regulator of DNA damage response by acting as a suppressor of RNF168, an E3 ubiquitin-protein ligase that promotes accumulation of 'Lys-63'-linked histone H2A and H2AX at DNA damage sites, thereby acting as a guard against excessive spreading of ubiquitinated chromatin at damaged chromosomes.</text>
</comment>
<comment type="catalytic activity">
    <reaction evidence="2">
        <text>S-ubiquitinyl-[E2 ubiquitin-conjugating enzyme]-L-cysteine + [acceptor protein]-L-lysine = [E2 ubiquitin-conjugating enzyme]-L-cysteine + N(6)-ubiquitinyl-[acceptor protein]-L-lysine.</text>
        <dbReference type="EC" id="2.3.2.26"/>
    </reaction>
</comment>
<comment type="pathway">
    <text evidence="2">Protein modification; protein ubiquitination.</text>
</comment>
<comment type="subcellular location">
    <subcellularLocation>
        <location evidence="2">Nucleus</location>
        <location evidence="2">Nucleoplasm</location>
    </subcellularLocation>
</comment>
<comment type="similarity">
    <text evidence="6">Belongs to the UPL family. K-HECT subfamily.</text>
</comment>
<feature type="chain" id="PRO_0000419691" description="E3 ubiquitin-protein ligase TRIP12">
    <location>
        <begin position="1"/>
        <end position="2026"/>
    </location>
</feature>
<feature type="domain" description="WWE" evidence="4">
    <location>
        <begin position="789"/>
        <end position="876"/>
    </location>
</feature>
<feature type="domain" description="HECT" evidence="3">
    <location>
        <begin position="1919"/>
        <end position="2026"/>
    </location>
</feature>
<feature type="region of interest" description="Disordered" evidence="5">
    <location>
        <begin position="1"/>
        <end position="437"/>
    </location>
</feature>
<feature type="region of interest" description="Disordered" evidence="5">
    <location>
        <begin position="1008"/>
        <end position="1123"/>
    </location>
</feature>
<feature type="region of interest" description="Disordered" evidence="5">
    <location>
        <begin position="1441"/>
        <end position="1470"/>
    </location>
</feature>
<feature type="region of interest" description="K-box" evidence="1">
    <location>
        <begin position="1530"/>
        <end position="1604"/>
    </location>
</feature>
<feature type="compositionally biased region" description="Polar residues" evidence="5">
    <location>
        <begin position="1"/>
        <end position="10"/>
    </location>
</feature>
<feature type="compositionally biased region" description="Polar residues" evidence="5">
    <location>
        <begin position="32"/>
        <end position="42"/>
    </location>
</feature>
<feature type="compositionally biased region" description="Polar residues" evidence="5">
    <location>
        <begin position="73"/>
        <end position="84"/>
    </location>
</feature>
<feature type="compositionally biased region" description="Low complexity" evidence="5">
    <location>
        <begin position="94"/>
        <end position="112"/>
    </location>
</feature>
<feature type="compositionally biased region" description="Low complexity" evidence="5">
    <location>
        <begin position="135"/>
        <end position="161"/>
    </location>
</feature>
<feature type="compositionally biased region" description="Low complexity" evidence="5">
    <location>
        <begin position="171"/>
        <end position="188"/>
    </location>
</feature>
<feature type="compositionally biased region" description="Low complexity" evidence="5">
    <location>
        <begin position="199"/>
        <end position="241"/>
    </location>
</feature>
<feature type="compositionally biased region" description="Polar residues" evidence="5">
    <location>
        <begin position="359"/>
        <end position="371"/>
    </location>
</feature>
<feature type="compositionally biased region" description="Basic and acidic residues" evidence="5">
    <location>
        <begin position="379"/>
        <end position="391"/>
    </location>
</feature>
<feature type="compositionally biased region" description="Polar residues" evidence="5">
    <location>
        <begin position="392"/>
        <end position="404"/>
    </location>
</feature>
<feature type="compositionally biased region" description="Low complexity" evidence="5">
    <location>
        <begin position="412"/>
        <end position="430"/>
    </location>
</feature>
<feature type="compositionally biased region" description="Basic residues" evidence="5">
    <location>
        <begin position="1040"/>
        <end position="1053"/>
    </location>
</feature>
<feature type="compositionally biased region" description="Basic and acidic residues" evidence="5">
    <location>
        <begin position="1056"/>
        <end position="1065"/>
    </location>
</feature>
<feature type="compositionally biased region" description="Low complexity" evidence="5">
    <location>
        <begin position="1068"/>
        <end position="1079"/>
    </location>
</feature>
<feature type="compositionally biased region" description="Polar residues" evidence="5">
    <location>
        <begin position="1094"/>
        <end position="1104"/>
    </location>
</feature>
<feature type="active site" description="Glycyl thioester intermediate" evidence="3">
    <location>
        <position position="1993"/>
    </location>
</feature>
<organism>
    <name type="scientific">Danio rerio</name>
    <name type="common">Zebrafish</name>
    <name type="synonym">Brachydanio rerio</name>
    <dbReference type="NCBI Taxonomy" id="7955"/>
    <lineage>
        <taxon>Eukaryota</taxon>
        <taxon>Metazoa</taxon>
        <taxon>Chordata</taxon>
        <taxon>Craniata</taxon>
        <taxon>Vertebrata</taxon>
        <taxon>Euteleostomi</taxon>
        <taxon>Actinopterygii</taxon>
        <taxon>Neopterygii</taxon>
        <taxon>Teleostei</taxon>
        <taxon>Ostariophysi</taxon>
        <taxon>Cypriniformes</taxon>
        <taxon>Danionidae</taxon>
        <taxon>Danioninae</taxon>
        <taxon>Danio</taxon>
    </lineage>
</organism>
<reference key="1">
    <citation type="journal article" date="2013" name="Nature">
        <title>The zebrafish reference genome sequence and its relationship to the human genome.</title>
        <authorList>
            <person name="Howe K."/>
            <person name="Clark M.D."/>
            <person name="Torroja C.F."/>
            <person name="Torrance J."/>
            <person name="Berthelot C."/>
            <person name="Muffato M."/>
            <person name="Collins J.E."/>
            <person name="Humphray S."/>
            <person name="McLaren K."/>
            <person name="Matthews L."/>
            <person name="McLaren S."/>
            <person name="Sealy I."/>
            <person name="Caccamo M."/>
            <person name="Churcher C."/>
            <person name="Scott C."/>
            <person name="Barrett J.C."/>
            <person name="Koch R."/>
            <person name="Rauch G.J."/>
            <person name="White S."/>
            <person name="Chow W."/>
            <person name="Kilian B."/>
            <person name="Quintais L.T."/>
            <person name="Guerra-Assuncao J.A."/>
            <person name="Zhou Y."/>
            <person name="Gu Y."/>
            <person name="Yen J."/>
            <person name="Vogel J.H."/>
            <person name="Eyre T."/>
            <person name="Redmond S."/>
            <person name="Banerjee R."/>
            <person name="Chi J."/>
            <person name="Fu B."/>
            <person name="Langley E."/>
            <person name="Maguire S.F."/>
            <person name="Laird G.K."/>
            <person name="Lloyd D."/>
            <person name="Kenyon E."/>
            <person name="Donaldson S."/>
            <person name="Sehra H."/>
            <person name="Almeida-King J."/>
            <person name="Loveland J."/>
            <person name="Trevanion S."/>
            <person name="Jones M."/>
            <person name="Quail M."/>
            <person name="Willey D."/>
            <person name="Hunt A."/>
            <person name="Burton J."/>
            <person name="Sims S."/>
            <person name="McLay K."/>
            <person name="Plumb B."/>
            <person name="Davis J."/>
            <person name="Clee C."/>
            <person name="Oliver K."/>
            <person name="Clark R."/>
            <person name="Riddle C."/>
            <person name="Elliot D."/>
            <person name="Threadgold G."/>
            <person name="Harden G."/>
            <person name="Ware D."/>
            <person name="Begum S."/>
            <person name="Mortimore B."/>
            <person name="Kerry G."/>
            <person name="Heath P."/>
            <person name="Phillimore B."/>
            <person name="Tracey A."/>
            <person name="Corby N."/>
            <person name="Dunn M."/>
            <person name="Johnson C."/>
            <person name="Wood J."/>
            <person name="Clark S."/>
            <person name="Pelan S."/>
            <person name="Griffiths G."/>
            <person name="Smith M."/>
            <person name="Glithero R."/>
            <person name="Howden P."/>
            <person name="Barker N."/>
            <person name="Lloyd C."/>
            <person name="Stevens C."/>
            <person name="Harley J."/>
            <person name="Holt K."/>
            <person name="Panagiotidis G."/>
            <person name="Lovell J."/>
            <person name="Beasley H."/>
            <person name="Henderson C."/>
            <person name="Gordon D."/>
            <person name="Auger K."/>
            <person name="Wright D."/>
            <person name="Collins J."/>
            <person name="Raisen C."/>
            <person name="Dyer L."/>
            <person name="Leung K."/>
            <person name="Robertson L."/>
            <person name="Ambridge K."/>
            <person name="Leongamornlert D."/>
            <person name="McGuire S."/>
            <person name="Gilderthorp R."/>
            <person name="Griffiths C."/>
            <person name="Manthravadi D."/>
            <person name="Nichol S."/>
            <person name="Barker G."/>
            <person name="Whitehead S."/>
            <person name="Kay M."/>
            <person name="Brown J."/>
            <person name="Murnane C."/>
            <person name="Gray E."/>
            <person name="Humphries M."/>
            <person name="Sycamore N."/>
            <person name="Barker D."/>
            <person name="Saunders D."/>
            <person name="Wallis J."/>
            <person name="Babbage A."/>
            <person name="Hammond S."/>
            <person name="Mashreghi-Mohammadi M."/>
            <person name="Barr L."/>
            <person name="Martin S."/>
            <person name="Wray P."/>
            <person name="Ellington A."/>
            <person name="Matthews N."/>
            <person name="Ellwood M."/>
            <person name="Woodmansey R."/>
            <person name="Clark G."/>
            <person name="Cooper J."/>
            <person name="Tromans A."/>
            <person name="Grafham D."/>
            <person name="Skuce C."/>
            <person name="Pandian R."/>
            <person name="Andrews R."/>
            <person name="Harrison E."/>
            <person name="Kimberley A."/>
            <person name="Garnett J."/>
            <person name="Fosker N."/>
            <person name="Hall R."/>
            <person name="Garner P."/>
            <person name="Kelly D."/>
            <person name="Bird C."/>
            <person name="Palmer S."/>
            <person name="Gehring I."/>
            <person name="Berger A."/>
            <person name="Dooley C.M."/>
            <person name="Ersan-Urun Z."/>
            <person name="Eser C."/>
            <person name="Geiger H."/>
            <person name="Geisler M."/>
            <person name="Karotki L."/>
            <person name="Kirn A."/>
            <person name="Konantz J."/>
            <person name="Konantz M."/>
            <person name="Oberlander M."/>
            <person name="Rudolph-Geiger S."/>
            <person name="Teucke M."/>
            <person name="Lanz C."/>
            <person name="Raddatz G."/>
            <person name="Osoegawa K."/>
            <person name="Zhu B."/>
            <person name="Rapp A."/>
            <person name="Widaa S."/>
            <person name="Langford C."/>
            <person name="Yang F."/>
            <person name="Schuster S.C."/>
            <person name="Carter N.P."/>
            <person name="Harrow J."/>
            <person name="Ning Z."/>
            <person name="Herrero J."/>
            <person name="Searle S.M."/>
            <person name="Enright A."/>
            <person name="Geisler R."/>
            <person name="Plasterk R.H."/>
            <person name="Lee C."/>
            <person name="Westerfield M."/>
            <person name="de Jong P.J."/>
            <person name="Zon L.I."/>
            <person name="Postlethwait J.H."/>
            <person name="Nusslein-Volhard C."/>
            <person name="Hubbard T.J."/>
            <person name="Roest Crollius H."/>
            <person name="Rogers J."/>
            <person name="Stemple D.L."/>
        </authorList>
    </citation>
    <scope>NUCLEOTIDE SEQUENCE [LARGE SCALE GENOMIC DNA]</scope>
    <source>
        <strain>Tuebingen</strain>
    </source>
</reference>
<name>TRIPC_DANRE</name>
<proteinExistence type="inferred from homology"/>
<gene>
    <name type="primary">trip12</name>
    <name type="synonym">si:ch211-272f3.4</name>
</gene>
<evidence type="ECO:0000250" key="1"/>
<evidence type="ECO:0000250" key="2">
    <source>
        <dbReference type="UniProtKB" id="Q14669"/>
    </source>
</evidence>
<evidence type="ECO:0000255" key="3">
    <source>
        <dbReference type="PROSITE-ProRule" id="PRU00104"/>
    </source>
</evidence>
<evidence type="ECO:0000255" key="4">
    <source>
        <dbReference type="PROSITE-ProRule" id="PRU00248"/>
    </source>
</evidence>
<evidence type="ECO:0000256" key="5">
    <source>
        <dbReference type="SAM" id="MobiDB-lite"/>
    </source>
</evidence>
<evidence type="ECO:0000305" key="6"/>
<dbReference type="EC" id="2.3.2.26"/>
<dbReference type="EMBL" id="BX255887">
    <property type="protein sequence ID" value="CAM56489.1"/>
    <property type="molecule type" value="Genomic_DNA"/>
</dbReference>
<dbReference type="EMBL" id="CU928079">
    <property type="status" value="NOT_ANNOTATED_CDS"/>
    <property type="molecule type" value="Genomic_DNA"/>
</dbReference>
<dbReference type="SMR" id="F1RCR6"/>
<dbReference type="FunCoup" id="F1RCR6">
    <property type="interactions" value="2163"/>
</dbReference>
<dbReference type="STRING" id="7955.ENSDARP00000082000"/>
<dbReference type="PaxDb" id="7955-ENSDARP00000082000"/>
<dbReference type="Ensembl" id="ENSDART00000145863">
    <property type="protein sequence ID" value="ENSDARP00000112916"/>
    <property type="gene ID" value="ENSDARG00000061397"/>
</dbReference>
<dbReference type="AGR" id="ZFIN:ZDB-GENE-041111-262"/>
<dbReference type="ZFIN" id="ZDB-GENE-041111-262">
    <property type="gene designation" value="trip12"/>
</dbReference>
<dbReference type="eggNOG" id="KOG0168">
    <property type="taxonomic scope" value="Eukaryota"/>
</dbReference>
<dbReference type="eggNOG" id="KOG0170">
    <property type="taxonomic scope" value="Eukaryota"/>
</dbReference>
<dbReference type="HOGENOM" id="CLU_000366_2_0_1"/>
<dbReference type="InParanoid" id="F1RCR6"/>
<dbReference type="OrthoDB" id="271273at2759"/>
<dbReference type="Reactome" id="R-DRE-983168">
    <property type="pathway name" value="Antigen processing: Ubiquitination &amp; Proteasome degradation"/>
</dbReference>
<dbReference type="UniPathway" id="UPA00143"/>
<dbReference type="PRO" id="PR:F1RCR6"/>
<dbReference type="Proteomes" id="UP000000437">
    <property type="component" value="Unplaced"/>
</dbReference>
<dbReference type="Bgee" id="ENSDARG00000061397">
    <property type="expression patterns" value="Expressed in retina and 20 other cell types or tissues"/>
</dbReference>
<dbReference type="ExpressionAtlas" id="F1RCR6">
    <property type="expression patterns" value="baseline and differential"/>
</dbReference>
<dbReference type="GO" id="GO:0016607">
    <property type="term" value="C:nuclear speck"/>
    <property type="evidence" value="ECO:0000318"/>
    <property type="project" value="GO_Central"/>
</dbReference>
<dbReference type="GO" id="GO:0005654">
    <property type="term" value="C:nucleoplasm"/>
    <property type="evidence" value="ECO:0000250"/>
    <property type="project" value="UniProtKB"/>
</dbReference>
<dbReference type="GO" id="GO:0061630">
    <property type="term" value="F:ubiquitin protein ligase activity"/>
    <property type="evidence" value="ECO:0000250"/>
    <property type="project" value="UniProtKB"/>
</dbReference>
<dbReference type="GO" id="GO:0006974">
    <property type="term" value="P:DNA damage response"/>
    <property type="evidence" value="ECO:0000318"/>
    <property type="project" value="GO_Central"/>
</dbReference>
<dbReference type="GO" id="GO:0006281">
    <property type="term" value="P:DNA repair"/>
    <property type="evidence" value="ECO:0007669"/>
    <property type="project" value="UniProtKB-KW"/>
</dbReference>
<dbReference type="GO" id="GO:0140861">
    <property type="term" value="P:DNA repair-dependent chromatin remodeling"/>
    <property type="evidence" value="ECO:0000250"/>
    <property type="project" value="UniProtKB"/>
</dbReference>
<dbReference type="GO" id="GO:0033696">
    <property type="term" value="P:heterochromatin boundary formation"/>
    <property type="evidence" value="ECO:0000250"/>
    <property type="project" value="UniProtKB"/>
</dbReference>
<dbReference type="GO" id="GO:0043161">
    <property type="term" value="P:proteasome-mediated ubiquitin-dependent protein catabolic process"/>
    <property type="evidence" value="ECO:0000318"/>
    <property type="project" value="GO_Central"/>
</dbReference>
<dbReference type="GO" id="GO:0000209">
    <property type="term" value="P:protein polyubiquitination"/>
    <property type="evidence" value="ECO:0000250"/>
    <property type="project" value="UniProtKB"/>
</dbReference>
<dbReference type="GO" id="GO:0045995">
    <property type="term" value="P:regulation of embryonic development"/>
    <property type="evidence" value="ECO:0000250"/>
    <property type="project" value="UniProtKB"/>
</dbReference>
<dbReference type="GO" id="GO:0006511">
    <property type="term" value="P:ubiquitin-dependent protein catabolic process"/>
    <property type="evidence" value="ECO:0000250"/>
    <property type="project" value="UniProtKB"/>
</dbReference>
<dbReference type="CDD" id="cd00078">
    <property type="entry name" value="HECTc"/>
    <property type="match status" value="1"/>
</dbReference>
<dbReference type="FunFam" id="3.30.2160.10:FF:000013">
    <property type="entry name" value="E3 ubiquitin-protein ligase TRIP12 isoform X1"/>
    <property type="match status" value="1"/>
</dbReference>
<dbReference type="FunFam" id="3.30.2410.10:FF:000005">
    <property type="entry name" value="E3 ubiquitin-protein ligase TRIP12 isoform X1"/>
    <property type="match status" value="1"/>
</dbReference>
<dbReference type="FunFam" id="3.90.1750.10:FF:000006">
    <property type="entry name" value="E3 ubiquitin-protein ligase TRIP12 isoform X1"/>
    <property type="match status" value="1"/>
</dbReference>
<dbReference type="FunFam" id="1.25.10.10:FF:000018">
    <property type="entry name" value="E3 ubiquitin-protein ligase TRIP12 isoform X3"/>
    <property type="match status" value="1"/>
</dbReference>
<dbReference type="Gene3D" id="3.30.2160.10">
    <property type="entry name" value="Hect, E3 ligase catalytic domain"/>
    <property type="match status" value="1"/>
</dbReference>
<dbReference type="Gene3D" id="3.30.2410.10">
    <property type="entry name" value="Hect, E3 ligase catalytic domain"/>
    <property type="match status" value="1"/>
</dbReference>
<dbReference type="Gene3D" id="3.90.1750.10">
    <property type="entry name" value="Hect, E3 ligase catalytic domains"/>
    <property type="match status" value="1"/>
</dbReference>
<dbReference type="Gene3D" id="1.25.10.10">
    <property type="entry name" value="Leucine-rich Repeat Variant"/>
    <property type="match status" value="1"/>
</dbReference>
<dbReference type="InterPro" id="IPR011989">
    <property type="entry name" value="ARM-like"/>
</dbReference>
<dbReference type="InterPro" id="IPR016024">
    <property type="entry name" value="ARM-type_fold"/>
</dbReference>
<dbReference type="InterPro" id="IPR000569">
    <property type="entry name" value="HECT_dom"/>
</dbReference>
<dbReference type="InterPro" id="IPR035983">
    <property type="entry name" value="Hect_E3_ubiquitin_ligase"/>
</dbReference>
<dbReference type="InterPro" id="IPR045322">
    <property type="entry name" value="HECTD1/TRIP12-like"/>
</dbReference>
<dbReference type="InterPro" id="IPR004170">
    <property type="entry name" value="WWE_dom"/>
</dbReference>
<dbReference type="InterPro" id="IPR037197">
    <property type="entry name" value="WWE_dom_sf"/>
</dbReference>
<dbReference type="PANTHER" id="PTHR45670">
    <property type="entry name" value="E3 UBIQUITIN-PROTEIN LIGASE TRIP12"/>
    <property type="match status" value="1"/>
</dbReference>
<dbReference type="PANTHER" id="PTHR45670:SF13">
    <property type="entry name" value="E3 UBIQUITIN-PROTEIN LIGASE TRIP12"/>
    <property type="match status" value="1"/>
</dbReference>
<dbReference type="Pfam" id="PF00632">
    <property type="entry name" value="HECT"/>
    <property type="match status" value="1"/>
</dbReference>
<dbReference type="SMART" id="SM00119">
    <property type="entry name" value="HECTc"/>
    <property type="match status" value="1"/>
</dbReference>
<dbReference type="SUPFAM" id="SSF48371">
    <property type="entry name" value="ARM repeat"/>
    <property type="match status" value="1"/>
</dbReference>
<dbReference type="SUPFAM" id="SSF56204">
    <property type="entry name" value="Hect, E3 ligase catalytic domain"/>
    <property type="match status" value="1"/>
</dbReference>
<dbReference type="SUPFAM" id="SSF117839">
    <property type="entry name" value="WWE domain"/>
    <property type="match status" value="1"/>
</dbReference>
<dbReference type="PROSITE" id="PS50237">
    <property type="entry name" value="HECT"/>
    <property type="match status" value="1"/>
</dbReference>
<dbReference type="PROSITE" id="PS50918">
    <property type="entry name" value="WWE"/>
    <property type="match status" value="1"/>
</dbReference>
<accession>F1RCR6</accession>
<accession>A3KPN5</accession>
<protein>
    <recommendedName>
        <fullName>E3 ubiquitin-protein ligase TRIP12</fullName>
        <ecNumber>2.3.2.26</ecNumber>
    </recommendedName>
    <alternativeName>
        <fullName>HECT-type E3 ubiquitin transferase TRIP12</fullName>
    </alternativeName>
    <alternativeName>
        <fullName>Thyroid receptor-interacting protein 12</fullName>
        <shortName>TR-interacting protein 12</shortName>
        <shortName>TRIP-12</shortName>
    </alternativeName>
</protein>